<evidence type="ECO:0000255" key="1">
    <source>
        <dbReference type="HAMAP-Rule" id="MF_00023"/>
    </source>
</evidence>
<evidence type="ECO:0000256" key="2">
    <source>
        <dbReference type="SAM" id="MobiDB-lite"/>
    </source>
</evidence>
<comment type="function">
    <text evidence="1">Required for rescue of stalled ribosomes mediated by trans-translation. Binds to transfer-messenger RNA (tmRNA), required for stable association of tmRNA with ribosomes. tmRNA and SmpB together mimic tRNA shape, replacing the anticodon stem-loop with SmpB. tmRNA is encoded by the ssrA gene; the 2 termini fold to resemble tRNA(Ala) and it encodes a 'tag peptide', a short internal open reading frame. During trans-translation Ala-aminoacylated tmRNA acts like a tRNA, entering the A-site of stalled ribosomes, displacing the stalled mRNA. The ribosome then switches to translate the ORF on the tmRNA; the nascent peptide is terminated with the 'tag peptide' encoded by the tmRNA and targeted for degradation. The ribosome is freed to recommence translation, which seems to be the essential function of trans-translation.</text>
</comment>
<comment type="subcellular location">
    <subcellularLocation>
        <location evidence="1">Cytoplasm</location>
    </subcellularLocation>
    <text evidence="1">The tmRNA-SmpB complex associates with stalled 70S ribosomes.</text>
</comment>
<comment type="similarity">
    <text evidence="1">Belongs to the SmpB family.</text>
</comment>
<keyword id="KW-0963">Cytoplasm</keyword>
<keyword id="KW-0694">RNA-binding</keyword>
<gene>
    <name evidence="1" type="primary">smpB</name>
    <name type="ordered locus">RALTA_A1671</name>
</gene>
<reference key="1">
    <citation type="journal article" date="2008" name="Genome Res.">
        <title>Genome sequence of the beta-rhizobium Cupriavidus taiwanensis and comparative genomics of rhizobia.</title>
        <authorList>
            <person name="Amadou C."/>
            <person name="Pascal G."/>
            <person name="Mangenot S."/>
            <person name="Glew M."/>
            <person name="Bontemps C."/>
            <person name="Capela D."/>
            <person name="Carrere S."/>
            <person name="Cruveiller S."/>
            <person name="Dossat C."/>
            <person name="Lajus A."/>
            <person name="Marchetti M."/>
            <person name="Poinsot V."/>
            <person name="Rouy Z."/>
            <person name="Servin B."/>
            <person name="Saad M."/>
            <person name="Schenowitz C."/>
            <person name="Barbe V."/>
            <person name="Batut J."/>
            <person name="Medigue C."/>
            <person name="Masson-Boivin C."/>
        </authorList>
    </citation>
    <scope>NUCLEOTIDE SEQUENCE [LARGE SCALE GENOMIC DNA]</scope>
    <source>
        <strain>DSM 17343 / BCRC 17206 / CCUG 44338 / CIP 107171 / LMG 19424 / R1</strain>
    </source>
</reference>
<accession>B3R297</accession>
<sequence>MTIADNKKAFFDYFIEERYEAGIVLEGWEVKAIRAGRVQIKEGYVVVRDAEMFLIGAHISPLQSASTHVKPDPVRTRKLLLKADEIKKLIGKVEQRGYTLVPLNLHYTRGRVKCEIGLAKGKKQFDKRETEKQRDWQREKARIMKGGKE</sequence>
<feature type="chain" id="PRO_1000090146" description="SsrA-binding protein">
    <location>
        <begin position="1"/>
        <end position="149"/>
    </location>
</feature>
<feature type="region of interest" description="Disordered" evidence="2">
    <location>
        <begin position="123"/>
        <end position="149"/>
    </location>
</feature>
<name>SSRP_CUPTR</name>
<dbReference type="EMBL" id="CU633749">
    <property type="protein sequence ID" value="CAQ69614.1"/>
    <property type="molecule type" value="Genomic_DNA"/>
</dbReference>
<dbReference type="RefSeq" id="WP_012352935.1">
    <property type="nucleotide sequence ID" value="NC_010528.1"/>
</dbReference>
<dbReference type="SMR" id="B3R297"/>
<dbReference type="GeneID" id="29760540"/>
<dbReference type="KEGG" id="cti:RALTA_A1671"/>
<dbReference type="eggNOG" id="COG0691">
    <property type="taxonomic scope" value="Bacteria"/>
</dbReference>
<dbReference type="HOGENOM" id="CLU_108953_3_0_4"/>
<dbReference type="BioCyc" id="CTAI977880:RALTA_RS08030-MONOMER"/>
<dbReference type="Proteomes" id="UP000001692">
    <property type="component" value="Chromosome 1"/>
</dbReference>
<dbReference type="GO" id="GO:0005829">
    <property type="term" value="C:cytosol"/>
    <property type="evidence" value="ECO:0007669"/>
    <property type="project" value="TreeGrafter"/>
</dbReference>
<dbReference type="GO" id="GO:0003723">
    <property type="term" value="F:RNA binding"/>
    <property type="evidence" value="ECO:0007669"/>
    <property type="project" value="UniProtKB-UniRule"/>
</dbReference>
<dbReference type="GO" id="GO:0070929">
    <property type="term" value="P:trans-translation"/>
    <property type="evidence" value="ECO:0007669"/>
    <property type="project" value="UniProtKB-UniRule"/>
</dbReference>
<dbReference type="CDD" id="cd09294">
    <property type="entry name" value="SmpB"/>
    <property type="match status" value="1"/>
</dbReference>
<dbReference type="Gene3D" id="2.40.280.10">
    <property type="match status" value="1"/>
</dbReference>
<dbReference type="HAMAP" id="MF_00023">
    <property type="entry name" value="SmpB"/>
    <property type="match status" value="1"/>
</dbReference>
<dbReference type="InterPro" id="IPR023620">
    <property type="entry name" value="SmpB"/>
</dbReference>
<dbReference type="InterPro" id="IPR000037">
    <property type="entry name" value="SsrA-bd_prot"/>
</dbReference>
<dbReference type="InterPro" id="IPR020081">
    <property type="entry name" value="SsrA-bd_prot_CS"/>
</dbReference>
<dbReference type="NCBIfam" id="NF003843">
    <property type="entry name" value="PRK05422.1"/>
    <property type="match status" value="1"/>
</dbReference>
<dbReference type="NCBIfam" id="TIGR00086">
    <property type="entry name" value="smpB"/>
    <property type="match status" value="1"/>
</dbReference>
<dbReference type="PANTHER" id="PTHR30308:SF2">
    <property type="entry name" value="SSRA-BINDING PROTEIN"/>
    <property type="match status" value="1"/>
</dbReference>
<dbReference type="PANTHER" id="PTHR30308">
    <property type="entry name" value="TMRNA-BINDING COMPONENT OF TRANS-TRANSLATION TAGGING COMPLEX"/>
    <property type="match status" value="1"/>
</dbReference>
<dbReference type="Pfam" id="PF01668">
    <property type="entry name" value="SmpB"/>
    <property type="match status" value="1"/>
</dbReference>
<dbReference type="SUPFAM" id="SSF74982">
    <property type="entry name" value="Small protein B (SmpB)"/>
    <property type="match status" value="1"/>
</dbReference>
<dbReference type="PROSITE" id="PS01317">
    <property type="entry name" value="SSRP"/>
    <property type="match status" value="1"/>
</dbReference>
<proteinExistence type="inferred from homology"/>
<protein>
    <recommendedName>
        <fullName evidence="1">SsrA-binding protein</fullName>
    </recommendedName>
    <alternativeName>
        <fullName evidence="1">Small protein B</fullName>
    </alternativeName>
</protein>
<organism>
    <name type="scientific">Cupriavidus taiwanensis (strain DSM 17343 / BCRC 17206 / CCUG 44338 / CIP 107171 / LMG 19424 / R1)</name>
    <name type="common">Ralstonia taiwanensis (strain LMG 19424)</name>
    <dbReference type="NCBI Taxonomy" id="977880"/>
    <lineage>
        <taxon>Bacteria</taxon>
        <taxon>Pseudomonadati</taxon>
        <taxon>Pseudomonadota</taxon>
        <taxon>Betaproteobacteria</taxon>
        <taxon>Burkholderiales</taxon>
        <taxon>Burkholderiaceae</taxon>
        <taxon>Cupriavidus</taxon>
    </lineage>
</organism>